<proteinExistence type="inferred from homology"/>
<sequence>MSLSIDVTSLPSISSSIFKNKSSSTASTLSGKSIGRNELYVSPDAEAFNKYMLSKSPEDIGPSDSASNDPLTSFSIRSHAVKTNADAGVSMDSSTQSRPSSNVGCDKVDFSFNKAMKVNANLDLSISISTDQKREKSKKDHKNKKCYPKIEAESDSDDYVLDDSDSDDGKCKNCKYKRKYFALRMRMKHVAMQLIEDL</sequence>
<reference key="1">
    <citation type="journal article" date="1989" name="Virology">
        <title>Evidence of duplication and deletion in super short segment 11 of rabbit rotavirus Alabama strain.</title>
        <authorList>
            <person name="Gorziglia M."/>
            <person name="Nishikawa K."/>
            <person name="Fukuhara N."/>
        </authorList>
    </citation>
    <scope>NUCLEOTIDE SEQUENCE [GENOMIC DNA]</scope>
</reference>
<organismHost>
    <name type="scientific">Oryctolagus cuniculus</name>
    <name type="common">Rabbit</name>
    <dbReference type="NCBI Taxonomy" id="9986"/>
</organismHost>
<evidence type="ECO:0000255" key="1">
    <source>
        <dbReference type="HAMAP-Rule" id="MF_04092"/>
    </source>
</evidence>
<organism>
    <name type="scientific">Rotavirus A (strain RVA/Rabbit/United States/ALA/XXXX/G3P11[14])</name>
    <name type="common">RV-A</name>
    <name type="synonym">Rotavirus A (strain Alabama)</name>
    <dbReference type="NCBI Taxonomy" id="101359"/>
    <lineage>
        <taxon>Viruses</taxon>
        <taxon>Riboviria</taxon>
        <taxon>Orthornavirae</taxon>
        <taxon>Duplornaviricota</taxon>
        <taxon>Resentoviricetes</taxon>
        <taxon>Reovirales</taxon>
        <taxon>Sedoreoviridae</taxon>
        <taxon>Rotavirus</taxon>
        <taxon>Rotavirus A</taxon>
    </lineage>
</organism>
<keyword id="KW-0325">Glycoprotein</keyword>
<keyword id="KW-1035">Host cytoplasm</keyword>
<keyword id="KW-0460">Magnesium</keyword>
<keyword id="KW-0479">Metal-binding</keyword>
<keyword id="KW-0547">Nucleotide-binding</keyword>
<keyword id="KW-0597">Phosphoprotein</keyword>
<keyword id="KW-0694">RNA-binding</keyword>
<accession>P17467</accession>
<dbReference type="EMBL" id="J04361">
    <property type="protein sequence ID" value="AAA66883.1"/>
    <property type="molecule type" value="Genomic_DNA"/>
</dbReference>
<dbReference type="PIR" id="A30233">
    <property type="entry name" value="MNXRRA"/>
</dbReference>
<dbReference type="SMR" id="P17467"/>
<dbReference type="GO" id="GO:0030430">
    <property type="term" value="C:host cell cytoplasm"/>
    <property type="evidence" value="ECO:0007669"/>
    <property type="project" value="UniProtKB-SubCell"/>
</dbReference>
<dbReference type="GO" id="GO:0016887">
    <property type="term" value="F:ATP hydrolysis activity"/>
    <property type="evidence" value="ECO:0007669"/>
    <property type="project" value="UniProtKB-UniRule"/>
</dbReference>
<dbReference type="GO" id="GO:0000287">
    <property type="term" value="F:magnesium ion binding"/>
    <property type="evidence" value="ECO:0007669"/>
    <property type="project" value="UniProtKB-UniRule"/>
</dbReference>
<dbReference type="GO" id="GO:0000166">
    <property type="term" value="F:nucleotide binding"/>
    <property type="evidence" value="ECO:0007669"/>
    <property type="project" value="UniProtKB-UniRule"/>
</dbReference>
<dbReference type="GO" id="GO:0003723">
    <property type="term" value="F:RNA binding"/>
    <property type="evidence" value="ECO:0007669"/>
    <property type="project" value="UniProtKB-UniRule"/>
</dbReference>
<dbReference type="GO" id="GO:0019079">
    <property type="term" value="P:viral genome replication"/>
    <property type="evidence" value="ECO:0007669"/>
    <property type="project" value="UniProtKB-UniRule"/>
</dbReference>
<dbReference type="HAMAP" id="MF_04092">
    <property type="entry name" value="ROTA_NSP5"/>
    <property type="match status" value="1"/>
</dbReference>
<dbReference type="InterPro" id="IPR002512">
    <property type="entry name" value="Rotavirus_A/C_NSP5"/>
</dbReference>
<dbReference type="Pfam" id="PF01525">
    <property type="entry name" value="Rota_NS26"/>
    <property type="match status" value="2"/>
</dbReference>
<dbReference type="PIRSF" id="PIRSF004006">
    <property type="entry name" value="Rota_NS26"/>
    <property type="match status" value="1"/>
</dbReference>
<feature type="chain" id="PRO_0000149640" description="Non-structural protein 5">
    <location>
        <begin position="1"/>
        <end position="198"/>
    </location>
</feature>
<feature type="binding site" evidence="1">
    <location>
        <position position="92"/>
    </location>
    <ligand>
        <name>Mg(2+)</name>
        <dbReference type="ChEBI" id="CHEBI:18420"/>
    </ligand>
</feature>
<feature type="modified residue" description="Phosphoserine; by host CK1" evidence="1">
    <location>
        <position position="67"/>
    </location>
</feature>
<feature type="modified residue" description="Phosphoserine; by host" evidence="1">
    <location>
        <position position="154"/>
    </location>
</feature>
<feature type="modified residue" description="Phosphoserine; by host" evidence="1">
    <location>
        <position position="156"/>
    </location>
</feature>
<feature type="modified residue" description="Phosphoserine; by host" evidence="1">
    <location>
        <position position="164"/>
    </location>
</feature>
<feature type="modified residue" description="Phosphoserine; by host" evidence="1">
    <location>
        <position position="166"/>
    </location>
</feature>
<protein>
    <recommendedName>
        <fullName evidence="1">Non-structural protein 5</fullName>
        <shortName evidence="1">NSP5</shortName>
    </recommendedName>
    <alternativeName>
        <fullName evidence="1">NS26</fullName>
    </alternativeName>
</protein>
<name>NSP5_ROTRA</name>
<comment type="function">
    <text evidence="1">Plays an essential role in the viral genome replication. Participates, together with NSP2, in the formation of viral factories (viroplasms), which are large inclusions in the host cytoplasm where replication intermediates are assembled and viral RNA replication takes place. Orchestrates the recruitment of viroplasmic proteins such as capsid proteins to these factories. Participates in the selective exclusion of host proteins from stress granules (SG) and P bodies (PB). Also participates in the sequestration of these remodeled organelles in viral factories.</text>
</comment>
<comment type="cofactor">
    <cofactor evidence="1">
        <name>Mg(2+)</name>
        <dbReference type="ChEBI" id="CHEBI:18420"/>
    </cofactor>
</comment>
<comment type="subunit">
    <text evidence="1">Homodimer. Interacts with VP1. Interacts with VP2. Interacts with NSP2; this interaction leads to up-regulation of NSP5 hyperphosphorylation and formation of virus factories. Interacts with NSP6. Participates in the selective exclusion of host proteins from stress granules (SG) and P bodies (PB). Also participates in the sequestration of these remodeled organelles in viral factories.</text>
</comment>
<comment type="subcellular location">
    <subcellularLocation>
        <location evidence="1">Host cytoplasm</location>
    </subcellularLocation>
    <text evidence="1">Found in spherical cytoplasmic structures, called virus factories, that appear early after infection and are the site of viral replication and packaging.</text>
</comment>
<comment type="PTM">
    <text evidence="1">O-glycosylated.</text>
</comment>
<comment type="PTM">
    <text evidence="1">Hyperphosphorylated on serine residues, when in dimeric form. Phosphorylation by host CK1 is required for the hyperphosphorylation of NSP5 dimer.</text>
</comment>
<comment type="similarity">
    <text evidence="1">Belongs to the rotavirus NSP5 family.</text>
</comment>